<organism>
    <name type="scientific">Pyrococcus furiosus (strain ATCC 43587 / DSM 3638 / JCM 8422 / Vc1)</name>
    <dbReference type="NCBI Taxonomy" id="186497"/>
    <lineage>
        <taxon>Archaea</taxon>
        <taxon>Methanobacteriati</taxon>
        <taxon>Methanobacteriota</taxon>
        <taxon>Thermococci</taxon>
        <taxon>Thermococcales</taxon>
        <taxon>Thermococcaceae</taxon>
        <taxon>Pyrococcus</taxon>
    </lineage>
</organism>
<evidence type="ECO:0000255" key="1">
    <source>
        <dbReference type="PROSITE-ProRule" id="PRU00241"/>
    </source>
</evidence>
<evidence type="ECO:0000269" key="2">
    <source>
    </source>
</evidence>
<evidence type="ECO:0000305" key="3"/>
<evidence type="ECO:0007829" key="4">
    <source>
        <dbReference type="PDB" id="5NW3"/>
    </source>
</evidence>
<comment type="function">
    <text>Rubredoxin is a small nonheme, iron protein lacking acid-labile sulfide. Its single Fe, chelated to 4 Cys, functions as an electron acceptor and may also stabilize the conformation of the molecule.</text>
</comment>
<comment type="cofactor">
    <cofactor>
        <name>Fe(3+)</name>
        <dbReference type="ChEBI" id="CHEBI:29034"/>
    </cofactor>
    <text>Binds 1 Fe(3+) ion per subunit.</text>
</comment>
<comment type="biophysicochemical properties">
    <temperatureDependence>
        <text>Extremely thermostable, being unaffected after incubation for 24 hours at 95 degrees Celsius.</text>
    </temperatureDependence>
</comment>
<comment type="similarity">
    <text evidence="3">Belongs to the rubredoxin family.</text>
</comment>
<gene>
    <name type="primary">rub</name>
    <name type="ordered locus">PF1282</name>
</gene>
<keyword id="KW-0002">3D-structure</keyword>
<keyword id="KW-0903">Direct protein sequencing</keyword>
<keyword id="KW-0249">Electron transport</keyword>
<keyword id="KW-0408">Iron</keyword>
<keyword id="KW-0479">Metal-binding</keyword>
<keyword id="KW-1185">Reference proteome</keyword>
<keyword id="KW-0813">Transport</keyword>
<reference key="1">
    <citation type="journal article" date="1999" name="Science">
        <title>Anaerobic microbes: oxygen detoxification without superoxide dismutase.</title>
        <authorList>
            <person name="Jenney F.E. Jr."/>
            <person name="Verhagen M.F.J.M."/>
            <person name="Cui X."/>
            <person name="Adams M.W.W."/>
        </authorList>
    </citation>
    <scope>NUCLEOTIDE SEQUENCE [GENOMIC DNA]</scope>
    <source>
        <strain>ATCC 43587 / DSM 3638 / JCM 8422 / Vc1</strain>
    </source>
</reference>
<reference key="2">
    <citation type="journal article" date="1999" name="Genetics">
        <title>Divergence of the hyperthermophilic archaea Pyrococcus furiosus and P. horikoshii inferred from complete genomic sequences.</title>
        <authorList>
            <person name="Maeder D.L."/>
            <person name="Weiss R.B."/>
            <person name="Dunn D.M."/>
            <person name="Cherry J.L."/>
            <person name="Gonzalez J.M."/>
            <person name="DiRuggiero J."/>
            <person name="Robb F.T."/>
        </authorList>
    </citation>
    <scope>NUCLEOTIDE SEQUENCE [LARGE SCALE GENOMIC DNA]</scope>
    <source>
        <strain>ATCC 43587 / DSM 3638 / JCM 8422 / Vc1</strain>
    </source>
</reference>
<reference key="3">
    <citation type="journal article" date="1991" name="Biochemistry">
        <title>Determinants of protein hyperthermostability: purification and amino acid sequence of rubredoxin from the hyperthermophilic archaebacterium Pyrococcus furiosus and secondary structure of the zinc adduct by NMR.</title>
        <authorList>
            <person name="Blake P.R."/>
            <person name="Park J.-B."/>
            <person name="Bryant F.O."/>
            <person name="Aono S."/>
            <person name="Magnuson J.K."/>
            <person name="Eccleston E."/>
            <person name="Howard J.B."/>
            <person name="Summers M.F."/>
            <person name="Adams M.W.W."/>
        </authorList>
    </citation>
    <scope>PROTEIN SEQUENCE OF 2-54</scope>
    <source>
        <strain>ATCC 43587 / DSM 3638 / JCM 8422 / Vc1</strain>
    </source>
</reference>
<reference key="4">
    <citation type="journal article" date="1992" name="Protein Sci.">
        <title>X-ray crystal structures of the oxidized and reduced forms of the rubredoxin from the marine hyperthermophilic archaebacterium Pyrococcus furiosus.</title>
        <authorList>
            <person name="Day M.W."/>
            <person name="Hsu B.T."/>
            <person name="Joshua-Tor L."/>
            <person name="Park J.-B."/>
            <person name="Zhou Z.H."/>
            <person name="Adams M.W.W."/>
            <person name="Rees D.C."/>
        </authorList>
    </citation>
    <scope>X-RAY CRYSTALLOGRAPHY (1.8 ANGSTROMS)</scope>
</reference>
<reference key="5">
    <citation type="journal article" date="1992" name="Protein Sci.">
        <title>Solution-state structure by NMR of zinc-substituted rubredoxin from the marine hyperthermophilic archaebacterium Pyrococcus furiosus.</title>
        <authorList>
            <person name="Blake P.R."/>
            <person name="Park J.-B."/>
            <person name="Zhou Z.H."/>
            <person name="Hare D.R."/>
            <person name="Adams M.W.W."/>
            <person name="Summers M.F."/>
        </authorList>
    </citation>
    <scope>STRUCTURE BY NMR</scope>
</reference>
<reference key="6">
    <citation type="journal article" date="1992" name="Protein Sci.">
        <title>Comparison of the X-ray structure of native rubredoxin from Pyrococcus furiosus with the NMR structure of the zinc-substituted protein.</title>
        <authorList>
            <person name="Blake P.R."/>
            <person name="Day M.W."/>
            <person name="Hsu B.T."/>
            <person name="Joshua-Tor L."/>
            <person name="Park J.-B."/>
            <person name="Hare D.R."/>
            <person name="Adams M.W.W."/>
            <person name="Rees D.C."/>
            <person name="Summers M.F."/>
        </authorList>
    </citation>
    <scope>COMPARISON OF NMR STRUCTURE WITH X-RAY STRUCTURE</scope>
</reference>
<reference key="7">
    <citation type="journal article" date="1998" name="J. Biol. Inorg. Chem.">
        <title>Crystal structure of rubredoxin from Pyrococcus furiosus at 0.95-A resolution, and the structures of N-terminal methionine and formylmethionine variants of Pf Rd. Contributions of N-terminal interactions to thermostability.</title>
        <authorList>
            <person name="Bau R."/>
            <person name="Rees D.C."/>
            <person name="Kurtz D.M. Jr."/>
            <person name="Scott R.A."/>
            <person name="Huang H."/>
            <person name="Adams M.W.W."/>
            <person name="Eidsness M.K."/>
        </authorList>
    </citation>
    <scope>X-RAY CRYSTALLOGRAPHY (1.1 ANGSTROMS)</scope>
</reference>
<reference key="8">
    <citation type="journal article" date="2000" name="Biochemistry">
        <title>Contribution of surface salt bridges to protein stability.</title>
        <authorList>
            <person name="Strop P."/>
            <person name="Mayo S.L."/>
        </authorList>
    </citation>
    <scope>STRUCTURE BY NMR</scope>
</reference>
<name>RUBR_PYRFU</name>
<dbReference type="EMBL" id="AF156097">
    <property type="protein sequence ID" value="AAF03228.1"/>
    <property type="molecule type" value="Genomic_DNA"/>
</dbReference>
<dbReference type="EMBL" id="AE009950">
    <property type="protein sequence ID" value="AAL81406.1"/>
    <property type="molecule type" value="Genomic_DNA"/>
</dbReference>
<dbReference type="PIR" id="T44570">
    <property type="entry name" value="RUPF"/>
</dbReference>
<dbReference type="PDB" id="1BQ8">
    <property type="method" value="X-ray"/>
    <property type="resolution" value="1.10 A"/>
    <property type="chains" value="A=1-54"/>
</dbReference>
<dbReference type="PDB" id="1BQ9">
    <property type="method" value="X-ray"/>
    <property type="resolution" value="1.20 A"/>
    <property type="chains" value="A=1-54"/>
</dbReference>
<dbReference type="PDB" id="1BRF">
    <property type="method" value="X-ray"/>
    <property type="resolution" value="0.95 A"/>
    <property type="chains" value="A=2-54"/>
</dbReference>
<dbReference type="PDB" id="1CAA">
    <property type="method" value="X-ray"/>
    <property type="resolution" value="1.80 A"/>
    <property type="chains" value="A=2-54"/>
</dbReference>
<dbReference type="PDB" id="1CAD">
    <property type="method" value="X-ray"/>
    <property type="resolution" value="1.80 A"/>
    <property type="chains" value="A=2-54"/>
</dbReference>
<dbReference type="PDB" id="1IU5">
    <property type="method" value="X-ray"/>
    <property type="resolution" value="1.50 A"/>
    <property type="chains" value="A=2-54"/>
</dbReference>
<dbReference type="PDB" id="1IU6">
    <property type="method" value="Neutron"/>
    <property type="resolution" value="1.60 A"/>
    <property type="chains" value="A=2-54"/>
</dbReference>
<dbReference type="PDB" id="1QCV">
    <property type="method" value="NMR"/>
    <property type="chains" value="A=2-54"/>
</dbReference>
<dbReference type="PDB" id="1RWD">
    <property type="method" value="NMR"/>
    <property type="chains" value="A=2-54"/>
</dbReference>
<dbReference type="PDB" id="1VCX">
    <property type="method" value="Neutron"/>
    <property type="resolution" value="1.50 A"/>
    <property type="chains" value="A=2-54"/>
</dbReference>
<dbReference type="PDB" id="1ZRP">
    <property type="method" value="NMR"/>
    <property type="chains" value="A=2-54"/>
</dbReference>
<dbReference type="PDB" id="2PVX">
    <property type="method" value="X-ray"/>
    <property type="resolution" value="1.04 A"/>
    <property type="chains" value="A/B/C/D/E/F/G/H=1-54"/>
</dbReference>
<dbReference type="PDB" id="3KYU">
    <property type="method" value="X-ray"/>
    <property type="resolution" value="1.10 A"/>
    <property type="chains" value="A=1-54"/>
</dbReference>
<dbReference type="PDB" id="3KYV">
    <property type="method" value="X-ray"/>
    <property type="resolution" value="1.10 A"/>
    <property type="chains" value="A=1-54"/>
</dbReference>
<dbReference type="PDB" id="3KYW">
    <property type="method" value="X-ray"/>
    <property type="resolution" value="1.10 A"/>
    <property type="chains" value="A=1-54"/>
</dbReference>
<dbReference type="PDB" id="3KYX">
    <property type="method" value="Other"/>
    <property type="resolution" value="1.68 A"/>
    <property type="chains" value="A=1-54"/>
</dbReference>
<dbReference type="PDB" id="3KYY">
    <property type="method" value="X-ray"/>
    <property type="resolution" value="1.10 A"/>
    <property type="chains" value="A=1-54"/>
</dbReference>
<dbReference type="PDB" id="3RYG">
    <property type="method" value="Neutron"/>
    <property type="resolution" value="1.75 A"/>
    <property type="chains" value="A=1-54"/>
</dbReference>
<dbReference type="PDB" id="3RZ6">
    <property type="method" value="Neutron"/>
    <property type="resolution" value="1.75 A"/>
    <property type="chains" value="A=1-54"/>
</dbReference>
<dbReference type="PDB" id="3RZT">
    <property type="method" value="Neutron"/>
    <property type="resolution" value="1.75 A"/>
    <property type="chains" value="A=1-54"/>
</dbReference>
<dbReference type="PDB" id="3SS2">
    <property type="method" value="Neutron"/>
    <property type="resolution" value="1.75 A"/>
    <property type="chains" value="A=1-54"/>
</dbReference>
<dbReference type="PDB" id="4AR3">
    <property type="method" value="Neutron"/>
    <property type="resolution" value="1.05 A"/>
    <property type="chains" value="A=1-54"/>
</dbReference>
<dbReference type="PDB" id="4AR4">
    <property type="method" value="Neutron"/>
    <property type="resolution" value="1.38 A"/>
    <property type="chains" value="A=1-54"/>
</dbReference>
<dbReference type="PDB" id="4AR5">
    <property type="method" value="X-ray"/>
    <property type="resolution" value="1.00 A"/>
    <property type="chains" value="A=1-54"/>
</dbReference>
<dbReference type="PDB" id="4AR6">
    <property type="method" value="X-ray"/>
    <property type="resolution" value="0.92 A"/>
    <property type="chains" value="A=1-54"/>
</dbReference>
<dbReference type="PDB" id="4K9F">
    <property type="method" value="Neutron"/>
    <property type="resolution" value="1.75 A"/>
    <property type="chains" value="A=1-54"/>
</dbReference>
<dbReference type="PDB" id="5AI2">
    <property type="method" value="Neutron"/>
    <property type="resolution" value="1.75 A"/>
    <property type="chains" value="A=1-54"/>
</dbReference>
<dbReference type="PDB" id="5AI3">
    <property type="method" value="X-ray"/>
    <property type="resolution" value="1.02 A"/>
    <property type="chains" value="A=1-54"/>
</dbReference>
<dbReference type="PDB" id="5NW3">
    <property type="method" value="X-ray"/>
    <property type="resolution" value="0.59 A"/>
    <property type="chains" value="A=1-54"/>
</dbReference>
<dbReference type="PDB" id="5OME">
    <property type="method" value="X-ray"/>
    <property type="resolution" value="0.75 A"/>
    <property type="chains" value="A=1-54"/>
</dbReference>
<dbReference type="PDB" id="9BKL">
    <property type="method" value="X-ray"/>
    <property type="resolution" value="1.70 A"/>
    <property type="chains" value="A=1-54"/>
</dbReference>
<dbReference type="PDB" id="9BKP">
    <property type="method" value="X-ray"/>
    <property type="resolution" value="1.80 A"/>
    <property type="chains" value="A=1-54"/>
</dbReference>
<dbReference type="PDB" id="9BKT">
    <property type="method" value="X-ray"/>
    <property type="resolution" value="1.80 A"/>
    <property type="chains" value="A=1-54"/>
</dbReference>
<dbReference type="PDBsum" id="1BQ8"/>
<dbReference type="PDBsum" id="1BQ9"/>
<dbReference type="PDBsum" id="1BRF"/>
<dbReference type="PDBsum" id="1CAA"/>
<dbReference type="PDBsum" id="1CAD"/>
<dbReference type="PDBsum" id="1IU5"/>
<dbReference type="PDBsum" id="1IU6"/>
<dbReference type="PDBsum" id="1QCV"/>
<dbReference type="PDBsum" id="1RWD"/>
<dbReference type="PDBsum" id="1VCX"/>
<dbReference type="PDBsum" id="1ZRP"/>
<dbReference type="PDBsum" id="2PVX"/>
<dbReference type="PDBsum" id="3KYU"/>
<dbReference type="PDBsum" id="3KYV"/>
<dbReference type="PDBsum" id="3KYW"/>
<dbReference type="PDBsum" id="3KYX"/>
<dbReference type="PDBsum" id="3KYY"/>
<dbReference type="PDBsum" id="3RYG"/>
<dbReference type="PDBsum" id="3RZ6"/>
<dbReference type="PDBsum" id="3RZT"/>
<dbReference type="PDBsum" id="3SS2"/>
<dbReference type="PDBsum" id="4AR3"/>
<dbReference type="PDBsum" id="4AR4"/>
<dbReference type="PDBsum" id="4AR5"/>
<dbReference type="PDBsum" id="4AR6"/>
<dbReference type="PDBsum" id="4K9F"/>
<dbReference type="PDBsum" id="5AI2"/>
<dbReference type="PDBsum" id="5AI3"/>
<dbReference type="PDBsum" id="5NW3"/>
<dbReference type="PDBsum" id="5OME"/>
<dbReference type="PDBsum" id="9BKL"/>
<dbReference type="PDBsum" id="9BKP"/>
<dbReference type="PDBsum" id="9BKT"/>
<dbReference type="BMRB" id="P24297"/>
<dbReference type="SMR" id="P24297"/>
<dbReference type="STRING" id="186497.PF1282"/>
<dbReference type="PaxDb" id="186497-PF1282"/>
<dbReference type="KEGG" id="pfu:PF1282"/>
<dbReference type="PATRIC" id="fig|186497.12.peg.1345"/>
<dbReference type="eggNOG" id="arCOG04391">
    <property type="taxonomic scope" value="Archaea"/>
</dbReference>
<dbReference type="HOGENOM" id="CLU_128747_3_3_2"/>
<dbReference type="OrthoDB" id="371635at2157"/>
<dbReference type="PhylomeDB" id="P24297"/>
<dbReference type="EvolutionaryTrace" id="P24297"/>
<dbReference type="Proteomes" id="UP000001013">
    <property type="component" value="Chromosome"/>
</dbReference>
<dbReference type="GO" id="GO:0009055">
    <property type="term" value="F:electron transfer activity"/>
    <property type="evidence" value="ECO:0007669"/>
    <property type="project" value="InterPro"/>
</dbReference>
<dbReference type="GO" id="GO:0005506">
    <property type="term" value="F:iron ion binding"/>
    <property type="evidence" value="ECO:0007669"/>
    <property type="project" value="InterPro"/>
</dbReference>
<dbReference type="GO" id="GO:0043448">
    <property type="term" value="P:alkane catabolic process"/>
    <property type="evidence" value="ECO:0007669"/>
    <property type="project" value="TreeGrafter"/>
</dbReference>
<dbReference type="CDD" id="cd00730">
    <property type="entry name" value="rubredoxin"/>
    <property type="match status" value="1"/>
</dbReference>
<dbReference type="FunFam" id="2.20.28.10:FF:000001">
    <property type="entry name" value="Rubredoxin"/>
    <property type="match status" value="1"/>
</dbReference>
<dbReference type="Gene3D" id="2.20.28.10">
    <property type="match status" value="1"/>
</dbReference>
<dbReference type="InterPro" id="IPR024922">
    <property type="entry name" value="Rubredoxin"/>
</dbReference>
<dbReference type="InterPro" id="IPR024934">
    <property type="entry name" value="Rubredoxin-like_dom"/>
</dbReference>
<dbReference type="InterPro" id="IPR024935">
    <property type="entry name" value="Rubredoxin_dom"/>
</dbReference>
<dbReference type="InterPro" id="IPR050526">
    <property type="entry name" value="Rubredoxin_ET"/>
</dbReference>
<dbReference type="InterPro" id="IPR018527">
    <property type="entry name" value="Rubredoxin_Fe_BS"/>
</dbReference>
<dbReference type="NCBIfam" id="NF045768">
    <property type="entry name" value="RubredRD"/>
    <property type="match status" value="1"/>
</dbReference>
<dbReference type="PANTHER" id="PTHR47627">
    <property type="entry name" value="RUBREDOXIN"/>
    <property type="match status" value="1"/>
</dbReference>
<dbReference type="PANTHER" id="PTHR47627:SF1">
    <property type="entry name" value="RUBREDOXIN-1-RELATED"/>
    <property type="match status" value="1"/>
</dbReference>
<dbReference type="Pfam" id="PF00301">
    <property type="entry name" value="Rubredoxin"/>
    <property type="match status" value="1"/>
</dbReference>
<dbReference type="PIRSF" id="PIRSF000071">
    <property type="entry name" value="Rubredoxin"/>
    <property type="match status" value="1"/>
</dbReference>
<dbReference type="PRINTS" id="PR00163">
    <property type="entry name" value="RUBREDOXIN"/>
</dbReference>
<dbReference type="SUPFAM" id="SSF57802">
    <property type="entry name" value="Rubredoxin-like"/>
    <property type="match status" value="1"/>
</dbReference>
<dbReference type="PROSITE" id="PS00202">
    <property type="entry name" value="RUBREDOXIN"/>
    <property type="match status" value="1"/>
</dbReference>
<dbReference type="PROSITE" id="PS50903">
    <property type="entry name" value="RUBREDOXIN_LIKE"/>
    <property type="match status" value="1"/>
</dbReference>
<feature type="initiator methionine" description="Removed" evidence="2">
    <location>
        <position position="1"/>
    </location>
</feature>
<feature type="chain" id="PRO_0000135063" description="Rubredoxin">
    <location>
        <begin position="2"/>
        <end position="54"/>
    </location>
</feature>
<feature type="domain" description="Rubredoxin-like" evidence="1">
    <location>
        <begin position="2"/>
        <end position="52"/>
    </location>
</feature>
<feature type="binding site">
    <location>
        <position position="6"/>
    </location>
    <ligand>
        <name>Fe cation</name>
        <dbReference type="ChEBI" id="CHEBI:24875"/>
    </ligand>
</feature>
<feature type="binding site">
    <location>
        <position position="9"/>
    </location>
    <ligand>
        <name>Fe cation</name>
        <dbReference type="ChEBI" id="CHEBI:24875"/>
    </ligand>
</feature>
<feature type="binding site">
    <location>
        <position position="39"/>
    </location>
    <ligand>
        <name>Fe cation</name>
        <dbReference type="ChEBI" id="CHEBI:24875"/>
    </ligand>
</feature>
<feature type="binding site">
    <location>
        <position position="42"/>
    </location>
    <ligand>
        <name>Fe cation</name>
        <dbReference type="ChEBI" id="CHEBI:24875"/>
    </ligand>
</feature>
<feature type="strand" evidence="4">
    <location>
        <begin position="3"/>
        <end position="6"/>
    </location>
</feature>
<feature type="turn" evidence="4">
    <location>
        <begin position="7"/>
        <end position="9"/>
    </location>
</feature>
<feature type="strand" evidence="4">
    <location>
        <begin position="12"/>
        <end position="14"/>
    </location>
</feature>
<feature type="turn" evidence="4">
    <location>
        <begin position="15"/>
        <end position="17"/>
    </location>
</feature>
<feature type="helix" evidence="4">
    <location>
        <begin position="20"/>
        <end position="22"/>
    </location>
</feature>
<feature type="helix" evidence="4">
    <location>
        <begin position="30"/>
        <end position="32"/>
    </location>
</feature>
<feature type="turn" evidence="4">
    <location>
        <begin position="40"/>
        <end position="42"/>
    </location>
</feature>
<feature type="helix" evidence="4">
    <location>
        <begin position="46"/>
        <end position="48"/>
    </location>
</feature>
<feature type="strand" evidence="4">
    <location>
        <begin position="49"/>
        <end position="52"/>
    </location>
</feature>
<sequence>MAKWVCKICGYIYDEDAGDPDNGISPGTKFEELPDDWVCPICGAPKSEFEKLED</sequence>
<proteinExistence type="evidence at protein level"/>
<accession>P24297</accession>
<accession>Q9UWP6</accession>
<protein>
    <recommendedName>
        <fullName>Rubredoxin</fullName>
        <shortName>Rd</shortName>
    </recommendedName>
</protein>